<dbReference type="EMBL" id="CP000850">
    <property type="protein sequence ID" value="ABW00089.1"/>
    <property type="molecule type" value="Genomic_DNA"/>
</dbReference>
<dbReference type="SMR" id="A8M521"/>
<dbReference type="STRING" id="391037.Sare_4307"/>
<dbReference type="KEGG" id="saq:Sare_4307"/>
<dbReference type="eggNOG" id="COG0255">
    <property type="taxonomic scope" value="Bacteria"/>
</dbReference>
<dbReference type="HOGENOM" id="CLU_158491_3_3_11"/>
<dbReference type="OrthoDB" id="9815192at2"/>
<dbReference type="GO" id="GO:0022625">
    <property type="term" value="C:cytosolic large ribosomal subunit"/>
    <property type="evidence" value="ECO:0007669"/>
    <property type="project" value="TreeGrafter"/>
</dbReference>
<dbReference type="GO" id="GO:0003735">
    <property type="term" value="F:structural constituent of ribosome"/>
    <property type="evidence" value="ECO:0007669"/>
    <property type="project" value="InterPro"/>
</dbReference>
<dbReference type="GO" id="GO:0006412">
    <property type="term" value="P:translation"/>
    <property type="evidence" value="ECO:0007669"/>
    <property type="project" value="UniProtKB-UniRule"/>
</dbReference>
<dbReference type="CDD" id="cd00427">
    <property type="entry name" value="Ribosomal_L29_HIP"/>
    <property type="match status" value="1"/>
</dbReference>
<dbReference type="FunFam" id="1.10.287.310:FF:000001">
    <property type="entry name" value="50S ribosomal protein L29"/>
    <property type="match status" value="1"/>
</dbReference>
<dbReference type="Gene3D" id="1.10.287.310">
    <property type="match status" value="1"/>
</dbReference>
<dbReference type="HAMAP" id="MF_00374">
    <property type="entry name" value="Ribosomal_uL29"/>
    <property type="match status" value="1"/>
</dbReference>
<dbReference type="InterPro" id="IPR050063">
    <property type="entry name" value="Ribosomal_protein_uL29"/>
</dbReference>
<dbReference type="InterPro" id="IPR001854">
    <property type="entry name" value="Ribosomal_uL29"/>
</dbReference>
<dbReference type="InterPro" id="IPR036049">
    <property type="entry name" value="Ribosomal_uL29_sf"/>
</dbReference>
<dbReference type="NCBIfam" id="TIGR00012">
    <property type="entry name" value="L29"/>
    <property type="match status" value="1"/>
</dbReference>
<dbReference type="PANTHER" id="PTHR10916">
    <property type="entry name" value="60S RIBOSOMAL PROTEIN L35/50S RIBOSOMAL PROTEIN L29"/>
    <property type="match status" value="1"/>
</dbReference>
<dbReference type="PANTHER" id="PTHR10916:SF0">
    <property type="entry name" value="LARGE RIBOSOMAL SUBUNIT PROTEIN UL29C"/>
    <property type="match status" value="1"/>
</dbReference>
<dbReference type="Pfam" id="PF00831">
    <property type="entry name" value="Ribosomal_L29"/>
    <property type="match status" value="1"/>
</dbReference>
<dbReference type="SUPFAM" id="SSF46561">
    <property type="entry name" value="Ribosomal protein L29 (L29p)"/>
    <property type="match status" value="1"/>
</dbReference>
<accession>A8M521</accession>
<comment type="similarity">
    <text evidence="1">Belongs to the universal ribosomal protein uL29 family.</text>
</comment>
<sequence>MAAGVKAAELRELSEEELVTKLREAKAELFNLRVQAATGQLDNNRRLQVIRREIARIYTIMRERELGLSAAPTEVTAG</sequence>
<feature type="chain" id="PRO_1000079900" description="Large ribosomal subunit protein uL29">
    <location>
        <begin position="1"/>
        <end position="78"/>
    </location>
</feature>
<proteinExistence type="inferred from homology"/>
<keyword id="KW-0687">Ribonucleoprotein</keyword>
<keyword id="KW-0689">Ribosomal protein</keyword>
<organism>
    <name type="scientific">Salinispora arenicola (strain CNS-205)</name>
    <dbReference type="NCBI Taxonomy" id="391037"/>
    <lineage>
        <taxon>Bacteria</taxon>
        <taxon>Bacillati</taxon>
        <taxon>Actinomycetota</taxon>
        <taxon>Actinomycetes</taxon>
        <taxon>Micromonosporales</taxon>
        <taxon>Micromonosporaceae</taxon>
        <taxon>Salinispora</taxon>
    </lineage>
</organism>
<name>RL29_SALAI</name>
<evidence type="ECO:0000255" key="1">
    <source>
        <dbReference type="HAMAP-Rule" id="MF_00374"/>
    </source>
</evidence>
<evidence type="ECO:0000305" key="2"/>
<reference key="1">
    <citation type="submission" date="2007-10" db="EMBL/GenBank/DDBJ databases">
        <title>Complete sequence of Salinispora arenicola CNS-205.</title>
        <authorList>
            <consortium name="US DOE Joint Genome Institute"/>
            <person name="Copeland A."/>
            <person name="Lucas S."/>
            <person name="Lapidus A."/>
            <person name="Barry K."/>
            <person name="Glavina del Rio T."/>
            <person name="Dalin E."/>
            <person name="Tice H."/>
            <person name="Pitluck S."/>
            <person name="Foster B."/>
            <person name="Schmutz J."/>
            <person name="Larimer F."/>
            <person name="Land M."/>
            <person name="Hauser L."/>
            <person name="Kyrpides N."/>
            <person name="Ivanova N."/>
            <person name="Jensen P.R."/>
            <person name="Moore B.S."/>
            <person name="Penn K."/>
            <person name="Jenkins C."/>
            <person name="Udwary D."/>
            <person name="Xiang L."/>
            <person name="Gontang E."/>
            <person name="Richardson P."/>
        </authorList>
    </citation>
    <scope>NUCLEOTIDE SEQUENCE [LARGE SCALE GENOMIC DNA]</scope>
    <source>
        <strain>CNS-205</strain>
    </source>
</reference>
<protein>
    <recommendedName>
        <fullName evidence="1">Large ribosomal subunit protein uL29</fullName>
    </recommendedName>
    <alternativeName>
        <fullName evidence="2">50S ribosomal protein L29</fullName>
    </alternativeName>
</protein>
<gene>
    <name evidence="1" type="primary">rpmC</name>
    <name type="ordered locus">Sare_4307</name>
</gene>